<organism>
    <name type="scientific">Saccharomyces cerevisiae (strain ATCC 204508 / S288c)</name>
    <name type="common">Baker's yeast</name>
    <dbReference type="NCBI Taxonomy" id="559292"/>
    <lineage>
        <taxon>Eukaryota</taxon>
        <taxon>Fungi</taxon>
        <taxon>Dikarya</taxon>
        <taxon>Ascomycota</taxon>
        <taxon>Saccharomycotina</taxon>
        <taxon>Saccharomycetes</taxon>
        <taxon>Saccharomycetales</taxon>
        <taxon>Saccharomycetaceae</taxon>
        <taxon>Saccharomyces</taxon>
    </lineage>
</organism>
<dbReference type="EC" id="3.6.4.13"/>
<dbReference type="EMBL" id="U00027">
    <property type="protein sequence ID" value="AAB68014.1"/>
    <property type="molecule type" value="Genomic_DNA"/>
</dbReference>
<dbReference type="EMBL" id="BK006934">
    <property type="protein sequence ID" value="DAA06862.1"/>
    <property type="molecule type" value="Genomic_DNA"/>
</dbReference>
<dbReference type="PIR" id="S48908">
    <property type="entry name" value="S48908"/>
</dbReference>
<dbReference type="RefSeq" id="NP_012039.1">
    <property type="nucleotide sequence ID" value="NM_001179300.1"/>
</dbReference>
<dbReference type="SMR" id="P38719"/>
<dbReference type="BioGRID" id="36603">
    <property type="interactions" value="127"/>
</dbReference>
<dbReference type="DIP" id="DIP-5628N"/>
<dbReference type="FunCoup" id="P38719">
    <property type="interactions" value="1024"/>
</dbReference>
<dbReference type="IntAct" id="P38719">
    <property type="interactions" value="119"/>
</dbReference>
<dbReference type="MINT" id="P38719"/>
<dbReference type="STRING" id="4932.YHR169W"/>
<dbReference type="PaxDb" id="4932-YHR169W"/>
<dbReference type="PeptideAtlas" id="P38719"/>
<dbReference type="EnsemblFungi" id="YHR169W_mRNA">
    <property type="protein sequence ID" value="YHR169W"/>
    <property type="gene ID" value="YHR169W"/>
</dbReference>
<dbReference type="GeneID" id="856574"/>
<dbReference type="KEGG" id="sce:YHR169W"/>
<dbReference type="AGR" id="SGD:S000001212"/>
<dbReference type="SGD" id="S000001212">
    <property type="gene designation" value="DBP8"/>
</dbReference>
<dbReference type="VEuPathDB" id="FungiDB:YHR169W"/>
<dbReference type="eggNOG" id="KOG0340">
    <property type="taxonomic scope" value="Eukaryota"/>
</dbReference>
<dbReference type="GeneTree" id="ENSGT00730000111231"/>
<dbReference type="HOGENOM" id="CLU_003041_1_1_1"/>
<dbReference type="InParanoid" id="P38719"/>
<dbReference type="OMA" id="IMIFTDT"/>
<dbReference type="OrthoDB" id="10261904at2759"/>
<dbReference type="BioCyc" id="YEAST:G3O-31203-MONOMER"/>
<dbReference type="Reactome" id="R-SCE-6791226">
    <property type="pathway name" value="Major pathway of rRNA processing in the nucleolus and cytosol"/>
</dbReference>
<dbReference type="BioGRID-ORCS" id="856574">
    <property type="hits" value="8 hits in 10 CRISPR screens"/>
</dbReference>
<dbReference type="CD-CODE" id="BDAE0F88">
    <property type="entry name" value="Nucleolus"/>
</dbReference>
<dbReference type="CD-CODE" id="E03F929F">
    <property type="entry name" value="Stress granule"/>
</dbReference>
<dbReference type="PRO" id="PR:P38719"/>
<dbReference type="Proteomes" id="UP000002311">
    <property type="component" value="Chromosome VIII"/>
</dbReference>
<dbReference type="RNAct" id="P38719">
    <property type="molecule type" value="protein"/>
</dbReference>
<dbReference type="GO" id="GO:0030686">
    <property type="term" value="C:90S preribosome"/>
    <property type="evidence" value="ECO:0007005"/>
    <property type="project" value="SGD"/>
</dbReference>
<dbReference type="GO" id="GO:0005730">
    <property type="term" value="C:nucleolus"/>
    <property type="evidence" value="ECO:0000314"/>
    <property type="project" value="SGD"/>
</dbReference>
<dbReference type="GO" id="GO:0005654">
    <property type="term" value="C:nucleoplasm"/>
    <property type="evidence" value="ECO:0000304"/>
    <property type="project" value="Reactome"/>
</dbReference>
<dbReference type="GO" id="GO:0005634">
    <property type="term" value="C:nucleus"/>
    <property type="evidence" value="ECO:0000318"/>
    <property type="project" value="GO_Central"/>
</dbReference>
<dbReference type="GO" id="GO:0032040">
    <property type="term" value="C:small-subunit processome"/>
    <property type="evidence" value="ECO:0000353"/>
    <property type="project" value="ComplexPortal"/>
</dbReference>
<dbReference type="GO" id="GO:0005524">
    <property type="term" value="F:ATP binding"/>
    <property type="evidence" value="ECO:0007669"/>
    <property type="project" value="UniProtKB-KW"/>
</dbReference>
<dbReference type="GO" id="GO:0016887">
    <property type="term" value="F:ATP hydrolysis activity"/>
    <property type="evidence" value="ECO:0000314"/>
    <property type="project" value="SGD"/>
</dbReference>
<dbReference type="GO" id="GO:0003723">
    <property type="term" value="F:RNA binding"/>
    <property type="evidence" value="ECO:0007669"/>
    <property type="project" value="UniProtKB-KW"/>
</dbReference>
<dbReference type="GO" id="GO:0003724">
    <property type="term" value="F:RNA helicase activity"/>
    <property type="evidence" value="ECO:0000315"/>
    <property type="project" value="SGD"/>
</dbReference>
<dbReference type="GO" id="GO:0000480">
    <property type="term" value="P:endonucleolytic cleavage in 5'-ETS of tricistronic rRNA transcript (SSU-rRNA, 5.8S rRNA, LSU-rRNA)"/>
    <property type="evidence" value="ECO:0000315"/>
    <property type="project" value="SGD"/>
</dbReference>
<dbReference type="GO" id="GO:0000447">
    <property type="term" value="P:endonucleolytic cleavage in ITS1 to separate SSU-rRNA from 5.8S rRNA and LSU-rRNA from tricistronic rRNA transcript (SSU-rRNA, 5.8S rRNA, LSU-rRNA)"/>
    <property type="evidence" value="ECO:0000315"/>
    <property type="project" value="SGD"/>
</dbReference>
<dbReference type="GO" id="GO:0000472">
    <property type="term" value="P:endonucleolytic cleavage to generate mature 5'-end of SSU-rRNA from (SSU-rRNA, 5.8S rRNA, LSU-rRNA)"/>
    <property type="evidence" value="ECO:0000315"/>
    <property type="project" value="SGD"/>
</dbReference>
<dbReference type="GO" id="GO:0030490">
    <property type="term" value="P:maturation of SSU-rRNA"/>
    <property type="evidence" value="ECO:0000303"/>
    <property type="project" value="ComplexPortal"/>
</dbReference>
<dbReference type="GO" id="GO:0006364">
    <property type="term" value="P:rRNA processing"/>
    <property type="evidence" value="ECO:0000318"/>
    <property type="project" value="GO_Central"/>
</dbReference>
<dbReference type="CDD" id="cd17955">
    <property type="entry name" value="DEADc_DDX49"/>
    <property type="match status" value="1"/>
</dbReference>
<dbReference type="CDD" id="cd18787">
    <property type="entry name" value="SF2_C_DEAD"/>
    <property type="match status" value="1"/>
</dbReference>
<dbReference type="FunFam" id="3.40.50.300:FF:000892">
    <property type="entry name" value="probable ATP-dependent RNA helicase DDX49"/>
    <property type="match status" value="1"/>
</dbReference>
<dbReference type="FunFam" id="3.40.50.300:FF:000993">
    <property type="entry name" value="probable ATP-dependent RNA helicase DDX49"/>
    <property type="match status" value="1"/>
</dbReference>
<dbReference type="Gene3D" id="3.40.50.300">
    <property type="entry name" value="P-loop containing nucleotide triphosphate hydrolases"/>
    <property type="match status" value="2"/>
</dbReference>
<dbReference type="InterPro" id="IPR011545">
    <property type="entry name" value="DEAD/DEAH_box_helicase_dom"/>
</dbReference>
<dbReference type="InterPro" id="IPR050079">
    <property type="entry name" value="DEAD_box_RNA_helicase"/>
</dbReference>
<dbReference type="InterPro" id="IPR014001">
    <property type="entry name" value="Helicase_ATP-bd"/>
</dbReference>
<dbReference type="InterPro" id="IPR001650">
    <property type="entry name" value="Helicase_C-like"/>
</dbReference>
<dbReference type="InterPro" id="IPR027417">
    <property type="entry name" value="P-loop_NTPase"/>
</dbReference>
<dbReference type="InterPro" id="IPR014014">
    <property type="entry name" value="RNA_helicase_DEAD_Q_motif"/>
</dbReference>
<dbReference type="PANTHER" id="PTHR47959:SF24">
    <property type="entry name" value="ATP-DEPENDENT RNA HELICASE"/>
    <property type="match status" value="1"/>
</dbReference>
<dbReference type="PANTHER" id="PTHR47959">
    <property type="entry name" value="ATP-DEPENDENT RNA HELICASE RHLE-RELATED"/>
    <property type="match status" value="1"/>
</dbReference>
<dbReference type="Pfam" id="PF00270">
    <property type="entry name" value="DEAD"/>
    <property type="match status" value="1"/>
</dbReference>
<dbReference type="Pfam" id="PF00271">
    <property type="entry name" value="Helicase_C"/>
    <property type="match status" value="1"/>
</dbReference>
<dbReference type="SMART" id="SM00487">
    <property type="entry name" value="DEXDc"/>
    <property type="match status" value="1"/>
</dbReference>
<dbReference type="SMART" id="SM00490">
    <property type="entry name" value="HELICc"/>
    <property type="match status" value="1"/>
</dbReference>
<dbReference type="SUPFAM" id="SSF52540">
    <property type="entry name" value="P-loop containing nucleoside triphosphate hydrolases"/>
    <property type="match status" value="1"/>
</dbReference>
<dbReference type="PROSITE" id="PS51192">
    <property type="entry name" value="HELICASE_ATP_BIND_1"/>
    <property type="match status" value="1"/>
</dbReference>
<dbReference type="PROSITE" id="PS51194">
    <property type="entry name" value="HELICASE_CTER"/>
    <property type="match status" value="1"/>
</dbReference>
<dbReference type="PROSITE" id="PS51195">
    <property type="entry name" value="Q_MOTIF"/>
    <property type="match status" value="1"/>
</dbReference>
<evidence type="ECO:0000255" key="1">
    <source>
        <dbReference type="PROSITE-ProRule" id="PRU00541"/>
    </source>
</evidence>
<evidence type="ECO:0000255" key="2">
    <source>
        <dbReference type="PROSITE-ProRule" id="PRU00542"/>
    </source>
</evidence>
<evidence type="ECO:0000256" key="3">
    <source>
        <dbReference type="SAM" id="MobiDB-lite"/>
    </source>
</evidence>
<evidence type="ECO:0000269" key="4">
    <source>
    </source>
</evidence>
<evidence type="ECO:0000269" key="5">
    <source>
    </source>
</evidence>
<evidence type="ECO:0000269" key="6">
    <source>
    </source>
</evidence>
<evidence type="ECO:0000269" key="7">
    <source>
    </source>
</evidence>
<evidence type="ECO:0000305" key="8"/>
<name>DBP8_YEAST</name>
<gene>
    <name type="primary">DBP8</name>
    <name type="ordered locus">YHR169W</name>
</gene>
<sequence length="431" mass="47878">MADFKSLGLSKWLTESLRAMKITQPTAIQKACIPKILEGRDCIGGAKTGSGKTIAFAGPMLTKWSEDPSGMFGVVLTPTRELAMQIAEQFTALGSSMNIRVSVIVGGESIVQQALDLQRKPHFIIATPGRLAHHIMSSGDDTVGGLMRAKYLVLDEADILLTSTFADHLATCISALPPKDKRQTLLFTATITDQVKSLQNAPVQKGKPPLFAYQVESVDNVAIPSTLKIEYILVPEHVKEAYLYQLLTCEEYENKTAIIFVNRTMTAEILRRTLKQLEVRVASLHSQMPQQERTNSLHRFRANAARILIATDVASRGLDIPTVELVVNYDIPSDPDVFIHRSGRTARAGRIGDAISFVTQRDVSRIQAIEDRINKKMTETNKVHDTAVIRKALTKVTKAKRESLMAMQKENFGERKRQQKKKQNDGKSLRS</sequence>
<reference key="1">
    <citation type="journal article" date="1994" name="Science">
        <title>Complete nucleotide sequence of Saccharomyces cerevisiae chromosome VIII.</title>
        <authorList>
            <person name="Johnston M."/>
            <person name="Andrews S."/>
            <person name="Brinkman R."/>
            <person name="Cooper J."/>
            <person name="Ding H."/>
            <person name="Dover J."/>
            <person name="Du Z."/>
            <person name="Favello A."/>
            <person name="Fulton L."/>
            <person name="Gattung S."/>
            <person name="Geisel C."/>
            <person name="Kirsten J."/>
            <person name="Kucaba T."/>
            <person name="Hillier L.W."/>
            <person name="Jier M."/>
            <person name="Johnston L."/>
            <person name="Langston Y."/>
            <person name="Latreille P."/>
            <person name="Louis E.J."/>
            <person name="Macri C."/>
            <person name="Mardis E."/>
            <person name="Menezes S."/>
            <person name="Mouser L."/>
            <person name="Nhan M."/>
            <person name="Rifkin L."/>
            <person name="Riles L."/>
            <person name="St Peter H."/>
            <person name="Trevaskis E."/>
            <person name="Vaughan K."/>
            <person name="Vignati D."/>
            <person name="Wilcox L."/>
            <person name="Wohldman P."/>
            <person name="Waterston R."/>
            <person name="Wilson R."/>
            <person name="Vaudin M."/>
        </authorList>
    </citation>
    <scope>NUCLEOTIDE SEQUENCE [LARGE SCALE GENOMIC DNA]</scope>
    <source>
        <strain>ATCC 204508 / S288c</strain>
    </source>
</reference>
<reference key="2">
    <citation type="journal article" date="2014" name="G3 (Bethesda)">
        <title>The reference genome sequence of Saccharomyces cerevisiae: Then and now.</title>
        <authorList>
            <person name="Engel S.R."/>
            <person name="Dietrich F.S."/>
            <person name="Fisk D.G."/>
            <person name="Binkley G."/>
            <person name="Balakrishnan R."/>
            <person name="Costanzo M.C."/>
            <person name="Dwight S.S."/>
            <person name="Hitz B.C."/>
            <person name="Karra K."/>
            <person name="Nash R.S."/>
            <person name="Weng S."/>
            <person name="Wong E.D."/>
            <person name="Lloyd P."/>
            <person name="Skrzypek M.S."/>
            <person name="Miyasato S.R."/>
            <person name="Simison M."/>
            <person name="Cherry J.M."/>
        </authorList>
    </citation>
    <scope>GENOME REANNOTATION</scope>
    <source>
        <strain>ATCC 204508 / S288c</strain>
    </source>
</reference>
<reference key="3">
    <citation type="journal article" date="2001" name="Nucleic Acids Res.">
        <title>Characterization and mutational analysis of yeast Dbp8p, a putative RNA helicase involved in ribosome biogenesis.</title>
        <authorList>
            <person name="Daugeron M.-C."/>
            <person name="Linder P."/>
        </authorList>
    </citation>
    <scope>FUNCTION</scope>
    <scope>SUBCELLULAR LOCATION</scope>
    <scope>MUTAGENESIS OF 51-GLY-LYS-52; 155-ASP-GLU-156; 188-THR--THR-190 AND 341-ARG-SER-342</scope>
</reference>
<reference key="4">
    <citation type="journal article" date="2003" name="Nature">
        <title>Global analysis of protein localization in budding yeast.</title>
        <authorList>
            <person name="Huh W.-K."/>
            <person name="Falvo J.V."/>
            <person name="Gerke L.C."/>
            <person name="Carroll A.S."/>
            <person name="Howson R.W."/>
            <person name="Weissman J.S."/>
            <person name="O'Shea E.K."/>
        </authorList>
    </citation>
    <scope>SUBCELLULAR LOCATION [LARGE SCALE ANALYSIS]</scope>
</reference>
<reference key="5">
    <citation type="journal article" date="2003" name="Nature">
        <title>Global analysis of protein expression in yeast.</title>
        <authorList>
            <person name="Ghaemmaghami S."/>
            <person name="Huh W.-K."/>
            <person name="Bower K."/>
            <person name="Howson R.W."/>
            <person name="Belle A."/>
            <person name="Dephoure N."/>
            <person name="O'Shea E.K."/>
            <person name="Weissman J.S."/>
        </authorList>
    </citation>
    <scope>LEVEL OF PROTEIN EXPRESSION [LARGE SCALE ANALYSIS]</scope>
</reference>
<reference key="6">
    <citation type="journal article" date="2006" name="Nucleic Acids Res.">
        <title>The nucleolar protein Esf2 interacts directly with the DExD/H box RNA helicase, Dbp8, to stimulate ATP hydrolysis.</title>
        <authorList>
            <person name="Granneman S."/>
            <person name="Lin C."/>
            <person name="Champion E.A."/>
            <person name="Nandineni M.R."/>
            <person name="Zorca C."/>
            <person name="Baserga S.J."/>
        </authorList>
    </citation>
    <scope>FUNCTION</scope>
    <scope>BIOPHYSICOCHEMICAL PROPERTIES</scope>
    <scope>INTERACTION WITH ESF2</scope>
    <scope>MUTAGENESIS OF LYS-52 AND ASP-155</scope>
</reference>
<keyword id="KW-0067">ATP-binding</keyword>
<keyword id="KW-0347">Helicase</keyword>
<keyword id="KW-0378">Hydrolase</keyword>
<keyword id="KW-0547">Nucleotide-binding</keyword>
<keyword id="KW-0539">Nucleus</keyword>
<keyword id="KW-1185">Reference proteome</keyword>
<keyword id="KW-0690">Ribosome biogenesis</keyword>
<keyword id="KW-0694">RNA-binding</keyword>
<keyword id="KW-0698">rRNA processing</keyword>
<feature type="chain" id="PRO_0000055038" description="ATP-dependent RNA helicase DBP8">
    <location>
        <begin position="1"/>
        <end position="431"/>
    </location>
</feature>
<feature type="domain" description="Helicase ATP-binding" evidence="1">
    <location>
        <begin position="33"/>
        <end position="209"/>
    </location>
</feature>
<feature type="domain" description="Helicase C-terminal" evidence="2">
    <location>
        <begin position="242"/>
        <end position="389"/>
    </location>
</feature>
<feature type="region of interest" description="Disordered" evidence="3">
    <location>
        <begin position="404"/>
        <end position="431"/>
    </location>
</feature>
<feature type="short sequence motif" description="Q motif">
    <location>
        <begin position="2"/>
        <end position="30"/>
    </location>
</feature>
<feature type="short sequence motif" description="DEAD box">
    <location>
        <begin position="155"/>
        <end position="158"/>
    </location>
</feature>
<feature type="compositionally biased region" description="Basic and acidic residues" evidence="3">
    <location>
        <begin position="411"/>
        <end position="431"/>
    </location>
</feature>
<feature type="binding site">
    <location>
        <begin position="46"/>
        <end position="53"/>
    </location>
    <ligand>
        <name>ATP</name>
        <dbReference type="ChEBI" id="CHEBI:30616"/>
    </ligand>
</feature>
<feature type="mutagenesis site" description="In DBP8-1; loss of activity." evidence="4">
    <original>GK</original>
    <variation>AA</variation>
    <location>
        <begin position="51"/>
        <end position="52"/>
    </location>
</feature>
<feature type="mutagenesis site" description="Decreases ATPase activity in vitro." evidence="7">
    <original>K</original>
    <variation>A</variation>
    <variation>R</variation>
    <location>
        <position position="52"/>
    </location>
</feature>
<feature type="mutagenesis site" description="In DBP8-2; loss of activity." evidence="4">
    <original>DE</original>
    <variation>AA</variation>
    <location>
        <begin position="155"/>
        <end position="156"/>
    </location>
</feature>
<feature type="mutagenesis site" description="Decreases ATPase activity in vitro." evidence="7">
    <original>D</original>
    <variation>A</variation>
    <location>
        <position position="155"/>
    </location>
</feature>
<feature type="mutagenesis site" description="In DBP8-3; severely affects growth." evidence="4">
    <original>TAT</original>
    <variation>AAA</variation>
    <location>
        <begin position="188"/>
        <end position="190"/>
    </location>
</feature>
<feature type="mutagenesis site" description="In DBP8-4; no effect on growth." evidence="4">
    <original>RS</original>
    <variation>AA</variation>
    <location>
        <begin position="341"/>
        <end position="342"/>
    </location>
</feature>
<protein>
    <recommendedName>
        <fullName>ATP-dependent RNA helicase DBP8</fullName>
        <ecNumber>3.6.4.13</ecNumber>
    </recommendedName>
    <alternativeName>
        <fullName>DEAD box protein 8</fullName>
    </alternativeName>
</protein>
<accession>P38719</accession>
<accession>D3DLB8</accession>
<comment type="function">
    <text evidence="4 7">ATP-binding RNA helicase involved in 40S ribosomal subunit biogenesis and is required for the normal formation of 18S rRNAs through pre-rRNA processing at A0, A1 and A2 sites. Required for vegetative growth.</text>
</comment>
<comment type="catalytic activity">
    <reaction>
        <text>ATP + H2O = ADP + phosphate + H(+)</text>
        <dbReference type="Rhea" id="RHEA:13065"/>
        <dbReference type="ChEBI" id="CHEBI:15377"/>
        <dbReference type="ChEBI" id="CHEBI:15378"/>
        <dbReference type="ChEBI" id="CHEBI:30616"/>
        <dbReference type="ChEBI" id="CHEBI:43474"/>
        <dbReference type="ChEBI" id="CHEBI:456216"/>
        <dbReference type="EC" id="3.6.4.13"/>
    </reaction>
</comment>
<comment type="biophysicochemical properties">
    <phDependence>
        <text evidence="7">Optimum pH is 7.4.</text>
    </phDependence>
    <temperatureDependence>
        <text evidence="7">Optimum temperature is 30 degrees Celsius.</text>
    </temperatureDependence>
</comment>
<comment type="subunit">
    <text evidence="7">Interacts with ESF2.</text>
</comment>
<comment type="interaction">
    <interactant intactId="EBI-5633">
        <id>P38719</id>
    </interactant>
    <interactant intactId="EBI-5844">
        <id>P36009</id>
        <label>DHR2</label>
    </interactant>
    <organismsDiffer>false</organismsDiffer>
    <experiments>2</experiments>
</comment>
<comment type="interaction">
    <interactant intactId="EBI-5633">
        <id>P38719</id>
    </interactant>
    <interactant intactId="EBI-28537">
        <id>P53743</id>
        <label>ESF2</label>
    </interactant>
    <organismsDiffer>false</organismsDiffer>
    <experiments>5</experiments>
</comment>
<comment type="interaction">
    <interactant intactId="EBI-5633">
        <id>P38719</id>
    </interactant>
    <interactant intactId="EBI-1878">
        <id>P53254</id>
        <label>UTP22</label>
    </interactant>
    <organismsDiffer>false</organismsDiffer>
    <experiments>2</experiments>
</comment>
<comment type="subcellular location">
    <subcellularLocation>
        <location evidence="4 5">Nucleus</location>
        <location evidence="4 5">Nucleolus</location>
    </subcellularLocation>
</comment>
<comment type="domain">
    <text>The Q motif is unique to and characteristic of the DEAD box family of RNA helicases and controls ATP binding and hydrolysis.</text>
</comment>
<comment type="miscellaneous">
    <text evidence="6">Present with 3500 molecules/cell in log phase SD medium.</text>
</comment>
<comment type="similarity">
    <text evidence="8">Belongs to the DEAD box helicase family. DDX49/DBP8 subfamily.</text>
</comment>
<proteinExistence type="evidence at protein level"/>